<gene>
    <name type="primary">ldha</name>
</gene>
<keyword id="KW-0963">Cytoplasm</keyword>
<keyword id="KW-0520">NAD</keyword>
<keyword id="KW-0560">Oxidoreductase</keyword>
<organism>
    <name type="scientific">Rhinogobiops nicholsii</name>
    <name type="common">Blackeye goby</name>
    <name type="synonym">Coryphopterus nicholsi</name>
    <dbReference type="NCBI Taxonomy" id="151723"/>
    <lineage>
        <taxon>Eukaryota</taxon>
        <taxon>Metazoa</taxon>
        <taxon>Chordata</taxon>
        <taxon>Craniata</taxon>
        <taxon>Vertebrata</taxon>
        <taxon>Euteleostomi</taxon>
        <taxon>Actinopterygii</taxon>
        <taxon>Neopterygii</taxon>
        <taxon>Teleostei</taxon>
        <taxon>Neoteleostei</taxon>
        <taxon>Acanthomorphata</taxon>
        <taxon>Gobiaria</taxon>
        <taxon>Gobiiformes</taxon>
        <taxon>Gobioidei</taxon>
        <taxon>Gobiidae</taxon>
        <taxon>Gobiinae</taxon>
        <taxon>Rhinogobiops</taxon>
    </lineage>
</organism>
<sequence length="332" mass="36221">MSTKEKLISHVSKEEAVGSRNKVTVVGVGMVGMASAISILLKDLCDELALVDVMEDKLKGEVMDLQHGSLFLKTHKIVGDKDYSVTANSRVVVVTAGARQQEGESRLNLVQRNVNIFKFIIPNIVKYSPNCILMVVSNPVDILTYVAWKLSGFPRHRVIGSGTNLDSARFRHIMGEKLHLHPSSCHGWIVGEHGDSSVPVWSGVNVAGVSLQTLNPKMGAEGDSENWKAVHKMVVDGAYEVIKLKGYTSWAIGMSVADLVESIVKNLHKVHPVSTLVKGMHGVKDEVFLSVPCVLGNSGLTDVIHMTLKADEEKQLVKSAETLWGVQKELTL</sequence>
<protein>
    <recommendedName>
        <fullName>L-lactate dehydrogenase A chain</fullName>
        <shortName>LDH-A</shortName>
        <ecNumber evidence="2">1.1.1.27</ecNumber>
    </recommendedName>
</protein>
<comment type="function">
    <text evidence="2">Interconverts simultaneously and stereospecifically pyruvate and lactate with concomitant interconversion of NADH and NAD(+).</text>
</comment>
<comment type="catalytic activity">
    <reaction evidence="2">
        <text>(S)-lactate + NAD(+) = pyruvate + NADH + H(+)</text>
        <dbReference type="Rhea" id="RHEA:23444"/>
        <dbReference type="ChEBI" id="CHEBI:15361"/>
        <dbReference type="ChEBI" id="CHEBI:15378"/>
        <dbReference type="ChEBI" id="CHEBI:16651"/>
        <dbReference type="ChEBI" id="CHEBI:57540"/>
        <dbReference type="ChEBI" id="CHEBI:57945"/>
        <dbReference type="EC" id="1.1.1.27"/>
    </reaction>
    <physiologicalReaction direction="left-to-right" evidence="2">
        <dbReference type="Rhea" id="RHEA:23445"/>
    </physiologicalReaction>
    <physiologicalReaction direction="right-to-left" evidence="2">
        <dbReference type="Rhea" id="RHEA:23446"/>
    </physiologicalReaction>
</comment>
<comment type="pathway">
    <text evidence="2">Fermentation; pyruvate fermentation to lactate; (S)-lactate from pyruvate: step 1/1.</text>
</comment>
<comment type="subunit">
    <text evidence="1">Homotetramer.</text>
</comment>
<comment type="subcellular location">
    <subcellularLocation>
        <location evidence="1">Cytoplasm</location>
    </subcellularLocation>
</comment>
<comment type="similarity">
    <text evidence="3">Belongs to the LDH/MDH superfamily. LDH family.</text>
</comment>
<dbReference type="EC" id="1.1.1.27" evidence="2"/>
<dbReference type="EMBL" id="AF079534">
    <property type="protein sequence ID" value="AAC31199.1"/>
    <property type="molecule type" value="mRNA"/>
</dbReference>
<dbReference type="SMR" id="O93401"/>
<dbReference type="UniPathway" id="UPA00554">
    <property type="reaction ID" value="UER00611"/>
</dbReference>
<dbReference type="GO" id="GO:0005737">
    <property type="term" value="C:cytoplasm"/>
    <property type="evidence" value="ECO:0007669"/>
    <property type="project" value="UniProtKB-SubCell"/>
</dbReference>
<dbReference type="GO" id="GO:0004459">
    <property type="term" value="F:L-lactate dehydrogenase activity"/>
    <property type="evidence" value="ECO:0007669"/>
    <property type="project" value="UniProtKB-EC"/>
</dbReference>
<dbReference type="GO" id="GO:0006089">
    <property type="term" value="P:lactate metabolic process"/>
    <property type="evidence" value="ECO:0007669"/>
    <property type="project" value="TreeGrafter"/>
</dbReference>
<dbReference type="CDD" id="cd05293">
    <property type="entry name" value="LDH_1"/>
    <property type="match status" value="1"/>
</dbReference>
<dbReference type="FunFam" id="3.40.50.720:FF:000029">
    <property type="entry name" value="L-lactate dehydrogenase A chain"/>
    <property type="match status" value="1"/>
</dbReference>
<dbReference type="FunFam" id="3.90.110.10:FF:000003">
    <property type="entry name" value="L-lactate dehydrogenase A chain"/>
    <property type="match status" value="1"/>
</dbReference>
<dbReference type="Gene3D" id="3.90.110.10">
    <property type="entry name" value="Lactate dehydrogenase/glycoside hydrolase, family 4, C-terminal"/>
    <property type="match status" value="1"/>
</dbReference>
<dbReference type="Gene3D" id="3.40.50.720">
    <property type="entry name" value="NAD(P)-binding Rossmann-like Domain"/>
    <property type="match status" value="1"/>
</dbReference>
<dbReference type="HAMAP" id="MF_00488">
    <property type="entry name" value="Lactate_dehydrog"/>
    <property type="match status" value="1"/>
</dbReference>
<dbReference type="InterPro" id="IPR001557">
    <property type="entry name" value="L-lactate/malate_DH"/>
</dbReference>
<dbReference type="InterPro" id="IPR011304">
    <property type="entry name" value="L-lactate_DH"/>
</dbReference>
<dbReference type="InterPro" id="IPR018177">
    <property type="entry name" value="L-lactate_DH_AS"/>
</dbReference>
<dbReference type="InterPro" id="IPR022383">
    <property type="entry name" value="Lactate/malate_DH_C"/>
</dbReference>
<dbReference type="InterPro" id="IPR001236">
    <property type="entry name" value="Lactate/malate_DH_N"/>
</dbReference>
<dbReference type="InterPro" id="IPR015955">
    <property type="entry name" value="Lactate_DH/Glyco_Ohase_4_C"/>
</dbReference>
<dbReference type="InterPro" id="IPR036291">
    <property type="entry name" value="NAD(P)-bd_dom_sf"/>
</dbReference>
<dbReference type="NCBIfam" id="TIGR01771">
    <property type="entry name" value="L-LDH-NAD"/>
    <property type="match status" value="1"/>
</dbReference>
<dbReference type="PANTHER" id="PTHR43128">
    <property type="entry name" value="L-2-HYDROXYCARBOXYLATE DEHYDROGENASE (NAD(P)(+))"/>
    <property type="match status" value="1"/>
</dbReference>
<dbReference type="PANTHER" id="PTHR43128:SF10">
    <property type="entry name" value="L-LACTATE DEHYDROGENASE A CHAIN"/>
    <property type="match status" value="1"/>
</dbReference>
<dbReference type="Pfam" id="PF02866">
    <property type="entry name" value="Ldh_1_C"/>
    <property type="match status" value="1"/>
</dbReference>
<dbReference type="Pfam" id="PF00056">
    <property type="entry name" value="Ldh_1_N"/>
    <property type="match status" value="1"/>
</dbReference>
<dbReference type="PIRSF" id="PIRSF000102">
    <property type="entry name" value="Lac_mal_DH"/>
    <property type="match status" value="1"/>
</dbReference>
<dbReference type="PRINTS" id="PR00086">
    <property type="entry name" value="LLDHDRGNASE"/>
</dbReference>
<dbReference type="SUPFAM" id="SSF56327">
    <property type="entry name" value="LDH C-terminal domain-like"/>
    <property type="match status" value="1"/>
</dbReference>
<dbReference type="SUPFAM" id="SSF51735">
    <property type="entry name" value="NAD(P)-binding Rossmann-fold domains"/>
    <property type="match status" value="1"/>
</dbReference>
<dbReference type="PROSITE" id="PS00064">
    <property type="entry name" value="L_LDH"/>
    <property type="match status" value="1"/>
</dbReference>
<name>LDHA_RHINC</name>
<proteinExistence type="evidence at transcript level"/>
<evidence type="ECO:0000250" key="1"/>
<evidence type="ECO:0000250" key="2">
    <source>
        <dbReference type="UniProtKB" id="P00338"/>
    </source>
</evidence>
<evidence type="ECO:0000305" key="3"/>
<accession>O93401</accession>
<reference key="1">
    <citation type="journal article" date="1997" name="J. Exp. Biol.">
        <title>Amino acid sequence differences cannot fully explain interspecific variation in thermal sensitivities of gobiid fish A4-lactate dehydrogenases (A4-LDHs).</title>
        <authorList>
            <person name="Fields P."/>
            <person name="Somero G."/>
        </authorList>
    </citation>
    <scope>NUCLEOTIDE SEQUENCE [MRNA]</scope>
    <source>
        <tissue>Muscle</tissue>
    </source>
</reference>
<feature type="initiator methionine" description="Removed" evidence="1">
    <location>
        <position position="1"/>
    </location>
</feature>
<feature type="chain" id="PRO_0000168433" description="L-lactate dehydrogenase A chain">
    <location>
        <begin position="2"/>
        <end position="332"/>
    </location>
</feature>
<feature type="active site" description="Proton acceptor" evidence="1">
    <location>
        <position position="193"/>
    </location>
</feature>
<feature type="binding site" evidence="1">
    <location>
        <begin position="29"/>
        <end position="57"/>
    </location>
    <ligand>
        <name>NAD(+)</name>
        <dbReference type="ChEBI" id="CHEBI:57540"/>
    </ligand>
</feature>
<feature type="binding site" evidence="1">
    <location>
        <position position="99"/>
    </location>
    <ligand>
        <name>NAD(+)</name>
        <dbReference type="ChEBI" id="CHEBI:57540"/>
    </ligand>
</feature>
<feature type="binding site" evidence="1">
    <location>
        <position position="106"/>
    </location>
    <ligand>
        <name>substrate</name>
    </ligand>
</feature>
<feature type="binding site" evidence="1">
    <location>
        <position position="138"/>
    </location>
    <ligand>
        <name>NAD(+)</name>
        <dbReference type="ChEBI" id="CHEBI:57540"/>
    </ligand>
</feature>
<feature type="binding site" evidence="1">
    <location>
        <position position="138"/>
    </location>
    <ligand>
        <name>substrate</name>
    </ligand>
</feature>
<feature type="binding site" evidence="1">
    <location>
        <position position="169"/>
    </location>
    <ligand>
        <name>substrate</name>
    </ligand>
</feature>
<feature type="binding site" evidence="1">
    <location>
        <position position="248"/>
    </location>
    <ligand>
        <name>substrate</name>
    </ligand>
</feature>